<dbReference type="EMBL" id="BA000036">
    <property type="protein sequence ID" value="BAB97899.1"/>
    <property type="molecule type" value="Genomic_DNA"/>
</dbReference>
<dbReference type="EMBL" id="BX927149">
    <property type="protein sequence ID" value="CAF19217.1"/>
    <property type="molecule type" value="Genomic_DNA"/>
</dbReference>
<dbReference type="RefSeq" id="NP_599748.1">
    <property type="nucleotide sequence ID" value="NC_003450.3"/>
</dbReference>
<dbReference type="RefSeq" id="WP_003854292.1">
    <property type="nucleotide sequence ID" value="NC_006958.1"/>
</dbReference>
<dbReference type="SMR" id="Q8NT09"/>
<dbReference type="STRING" id="196627.cg0594"/>
<dbReference type="GeneID" id="1021508"/>
<dbReference type="KEGG" id="cgb:cg0594"/>
<dbReference type="KEGG" id="cgl:Cgl0505"/>
<dbReference type="PATRIC" id="fig|196627.13.peg.503"/>
<dbReference type="eggNOG" id="COG0087">
    <property type="taxonomic scope" value="Bacteria"/>
</dbReference>
<dbReference type="HOGENOM" id="CLU_044142_4_1_11"/>
<dbReference type="OrthoDB" id="9806135at2"/>
<dbReference type="BioCyc" id="CORYNE:G18NG-10068-MONOMER"/>
<dbReference type="Proteomes" id="UP000000582">
    <property type="component" value="Chromosome"/>
</dbReference>
<dbReference type="Proteomes" id="UP000001009">
    <property type="component" value="Chromosome"/>
</dbReference>
<dbReference type="GO" id="GO:0022625">
    <property type="term" value="C:cytosolic large ribosomal subunit"/>
    <property type="evidence" value="ECO:0007669"/>
    <property type="project" value="TreeGrafter"/>
</dbReference>
<dbReference type="GO" id="GO:0019843">
    <property type="term" value="F:rRNA binding"/>
    <property type="evidence" value="ECO:0007669"/>
    <property type="project" value="UniProtKB-UniRule"/>
</dbReference>
<dbReference type="GO" id="GO:0003735">
    <property type="term" value="F:structural constituent of ribosome"/>
    <property type="evidence" value="ECO:0007669"/>
    <property type="project" value="InterPro"/>
</dbReference>
<dbReference type="GO" id="GO:0006412">
    <property type="term" value="P:translation"/>
    <property type="evidence" value="ECO:0007669"/>
    <property type="project" value="UniProtKB-UniRule"/>
</dbReference>
<dbReference type="FunFam" id="2.40.30.10:FF:000004">
    <property type="entry name" value="50S ribosomal protein L3"/>
    <property type="match status" value="1"/>
</dbReference>
<dbReference type="FunFam" id="3.30.160.810:FF:000001">
    <property type="entry name" value="50S ribosomal protein L3"/>
    <property type="match status" value="1"/>
</dbReference>
<dbReference type="Gene3D" id="3.30.160.810">
    <property type="match status" value="1"/>
</dbReference>
<dbReference type="Gene3D" id="2.40.30.10">
    <property type="entry name" value="Translation factors"/>
    <property type="match status" value="1"/>
</dbReference>
<dbReference type="HAMAP" id="MF_01325_B">
    <property type="entry name" value="Ribosomal_uL3_B"/>
    <property type="match status" value="1"/>
</dbReference>
<dbReference type="InterPro" id="IPR000597">
    <property type="entry name" value="Ribosomal_uL3"/>
</dbReference>
<dbReference type="InterPro" id="IPR019927">
    <property type="entry name" value="Ribosomal_uL3_bac/org-type"/>
</dbReference>
<dbReference type="InterPro" id="IPR019926">
    <property type="entry name" value="Ribosomal_uL3_CS"/>
</dbReference>
<dbReference type="InterPro" id="IPR009000">
    <property type="entry name" value="Transl_B-barrel_sf"/>
</dbReference>
<dbReference type="NCBIfam" id="TIGR03625">
    <property type="entry name" value="L3_bact"/>
    <property type="match status" value="1"/>
</dbReference>
<dbReference type="PANTHER" id="PTHR11229">
    <property type="entry name" value="50S RIBOSOMAL PROTEIN L3"/>
    <property type="match status" value="1"/>
</dbReference>
<dbReference type="PANTHER" id="PTHR11229:SF16">
    <property type="entry name" value="LARGE RIBOSOMAL SUBUNIT PROTEIN UL3C"/>
    <property type="match status" value="1"/>
</dbReference>
<dbReference type="Pfam" id="PF00297">
    <property type="entry name" value="Ribosomal_L3"/>
    <property type="match status" value="1"/>
</dbReference>
<dbReference type="SUPFAM" id="SSF50447">
    <property type="entry name" value="Translation proteins"/>
    <property type="match status" value="1"/>
</dbReference>
<dbReference type="PROSITE" id="PS00474">
    <property type="entry name" value="RIBOSOMAL_L3"/>
    <property type="match status" value="1"/>
</dbReference>
<keyword id="KW-1185">Reference proteome</keyword>
<keyword id="KW-0687">Ribonucleoprotein</keyword>
<keyword id="KW-0689">Ribosomal protein</keyword>
<keyword id="KW-0694">RNA-binding</keyword>
<keyword id="KW-0699">rRNA-binding</keyword>
<accession>Q8NT09</accession>
<gene>
    <name evidence="1" type="primary">rplC</name>
    <name type="ordered locus">Cgl0505</name>
    <name type="ordered locus">cg0594</name>
</gene>
<proteinExistence type="inferred from homology"/>
<feature type="chain" id="PRO_0000077095" description="Large ribosomal subunit protein uL3">
    <location>
        <begin position="1"/>
        <end position="218"/>
    </location>
</feature>
<sequence>MSENEIKGILGTKLGMTQIFDEENRVIPVTVVEAGPCVVSQIRTVETDGYNAIQIAYGEIDPRKVNQPLTGHFKKAGVTPRRHVTEIRMDDVSGYEVGQDVTVEIFNDIKFVDVTGTTKGKGYAGAMKRHGFAGQGAGHGNQAAHRRVGGIGAAATPGRIFKGKRMAGRMGNDRVTTQNLKVQKIDADANIILIKGAIPGNRGGIVTVKTAVKGGAHA</sequence>
<protein>
    <recommendedName>
        <fullName evidence="1">Large ribosomal subunit protein uL3</fullName>
    </recommendedName>
    <alternativeName>
        <fullName evidence="2">50S ribosomal protein L3</fullName>
    </alternativeName>
</protein>
<name>RL3_CORGL</name>
<organism>
    <name type="scientific">Corynebacterium glutamicum (strain ATCC 13032 / DSM 20300 / JCM 1318 / BCRC 11384 / CCUG 27702 / LMG 3730 / NBRC 12168 / NCIMB 10025 / NRRL B-2784 / 534)</name>
    <dbReference type="NCBI Taxonomy" id="196627"/>
    <lineage>
        <taxon>Bacteria</taxon>
        <taxon>Bacillati</taxon>
        <taxon>Actinomycetota</taxon>
        <taxon>Actinomycetes</taxon>
        <taxon>Mycobacteriales</taxon>
        <taxon>Corynebacteriaceae</taxon>
        <taxon>Corynebacterium</taxon>
    </lineage>
</organism>
<comment type="function">
    <text evidence="1">One of the primary rRNA binding proteins, it binds directly near the 3'-end of the 23S rRNA, where it nucleates assembly of the 50S subunit.</text>
</comment>
<comment type="subunit">
    <text evidence="1">Part of the 50S ribosomal subunit. Forms a cluster with proteins L14 and L19.</text>
</comment>
<comment type="similarity">
    <text evidence="1">Belongs to the universal ribosomal protein uL3 family.</text>
</comment>
<evidence type="ECO:0000255" key="1">
    <source>
        <dbReference type="HAMAP-Rule" id="MF_01325"/>
    </source>
</evidence>
<evidence type="ECO:0000305" key="2"/>
<reference key="1">
    <citation type="journal article" date="2003" name="Appl. Microbiol. Biotechnol.">
        <title>The Corynebacterium glutamicum genome: features and impacts on biotechnological processes.</title>
        <authorList>
            <person name="Ikeda M."/>
            <person name="Nakagawa S."/>
        </authorList>
    </citation>
    <scope>NUCLEOTIDE SEQUENCE [LARGE SCALE GENOMIC DNA]</scope>
    <source>
        <strain>ATCC 13032 / DSM 20300 / JCM 1318 / BCRC 11384 / CCUG 27702 / LMG 3730 / NBRC 12168 / NCIMB 10025 / NRRL B-2784 / 534</strain>
    </source>
</reference>
<reference key="2">
    <citation type="journal article" date="2003" name="J. Biotechnol.">
        <title>The complete Corynebacterium glutamicum ATCC 13032 genome sequence and its impact on the production of L-aspartate-derived amino acids and vitamins.</title>
        <authorList>
            <person name="Kalinowski J."/>
            <person name="Bathe B."/>
            <person name="Bartels D."/>
            <person name="Bischoff N."/>
            <person name="Bott M."/>
            <person name="Burkovski A."/>
            <person name="Dusch N."/>
            <person name="Eggeling L."/>
            <person name="Eikmanns B.J."/>
            <person name="Gaigalat L."/>
            <person name="Goesmann A."/>
            <person name="Hartmann M."/>
            <person name="Huthmacher K."/>
            <person name="Kraemer R."/>
            <person name="Linke B."/>
            <person name="McHardy A.C."/>
            <person name="Meyer F."/>
            <person name="Moeckel B."/>
            <person name="Pfefferle W."/>
            <person name="Puehler A."/>
            <person name="Rey D.A."/>
            <person name="Rueckert C."/>
            <person name="Rupp O."/>
            <person name="Sahm H."/>
            <person name="Wendisch V.F."/>
            <person name="Wiegraebe I."/>
            <person name="Tauch A."/>
        </authorList>
    </citation>
    <scope>NUCLEOTIDE SEQUENCE [LARGE SCALE GENOMIC DNA]</scope>
    <source>
        <strain>ATCC 13032 / DSM 20300 / JCM 1318 / BCRC 11384 / CCUG 27702 / LMG 3730 / NBRC 12168 / NCIMB 10025 / NRRL B-2784 / 534</strain>
    </source>
</reference>